<organism>
    <name type="scientific">Streptococcus pneumoniae serotype 4 (strain ATCC BAA-334 / TIGR4)</name>
    <dbReference type="NCBI Taxonomy" id="170187"/>
    <lineage>
        <taxon>Bacteria</taxon>
        <taxon>Bacillati</taxon>
        <taxon>Bacillota</taxon>
        <taxon>Bacilli</taxon>
        <taxon>Lactobacillales</taxon>
        <taxon>Streptococcaceae</taxon>
        <taxon>Streptococcus</taxon>
    </lineage>
</organism>
<gene>
    <name evidence="1" type="primary">trpA</name>
    <name type="ordered locus">SP_1811</name>
</gene>
<name>TRPA_STRPN</name>
<comment type="function">
    <text evidence="1">The alpha subunit is responsible for the aldol cleavage of indoleglycerol phosphate to indole and glyceraldehyde 3-phosphate.</text>
</comment>
<comment type="catalytic activity">
    <reaction evidence="1">
        <text>(1S,2R)-1-C-(indol-3-yl)glycerol 3-phosphate + L-serine = D-glyceraldehyde 3-phosphate + L-tryptophan + H2O</text>
        <dbReference type="Rhea" id="RHEA:10532"/>
        <dbReference type="ChEBI" id="CHEBI:15377"/>
        <dbReference type="ChEBI" id="CHEBI:33384"/>
        <dbReference type="ChEBI" id="CHEBI:57912"/>
        <dbReference type="ChEBI" id="CHEBI:58866"/>
        <dbReference type="ChEBI" id="CHEBI:59776"/>
        <dbReference type="EC" id="4.2.1.20"/>
    </reaction>
</comment>
<comment type="pathway">
    <text evidence="1">Amino-acid biosynthesis; L-tryptophan biosynthesis; L-tryptophan from chorismate: step 5/5.</text>
</comment>
<comment type="subunit">
    <text evidence="1">Tetramer of two alpha and two beta chains.</text>
</comment>
<comment type="similarity">
    <text evidence="1">Belongs to the TrpA family.</text>
</comment>
<dbReference type="EC" id="4.2.1.20" evidence="1"/>
<dbReference type="EMBL" id="AE005672">
    <property type="protein sequence ID" value="AAK75884.1"/>
    <property type="molecule type" value="Genomic_DNA"/>
</dbReference>
<dbReference type="PIR" id="C95211">
    <property type="entry name" value="C95211"/>
</dbReference>
<dbReference type="RefSeq" id="WP_001126999.1">
    <property type="nucleotide sequence ID" value="NC_003028.3"/>
</dbReference>
<dbReference type="PDB" id="5KIN">
    <property type="method" value="X-ray"/>
    <property type="resolution" value="2.45 A"/>
    <property type="chains" value="A/C=1-258"/>
</dbReference>
<dbReference type="PDB" id="6QKY">
    <property type="method" value="X-ray"/>
    <property type="resolution" value="2.54 A"/>
    <property type="chains" value="A/B/C/D/E/F/G/H/I/J=1-258"/>
</dbReference>
<dbReference type="PDBsum" id="5KIN"/>
<dbReference type="PDBsum" id="6QKY"/>
<dbReference type="SMR" id="Q97P33"/>
<dbReference type="PaxDb" id="170187-SP_1811"/>
<dbReference type="EnsemblBacteria" id="AAK75884">
    <property type="protein sequence ID" value="AAK75884"/>
    <property type="gene ID" value="SP_1811"/>
</dbReference>
<dbReference type="KEGG" id="spn:SP_1811"/>
<dbReference type="eggNOG" id="COG0159">
    <property type="taxonomic scope" value="Bacteria"/>
</dbReference>
<dbReference type="PhylomeDB" id="Q97P33"/>
<dbReference type="BioCyc" id="SPNE170187:G1FZB-1843-MONOMER"/>
<dbReference type="UniPathway" id="UPA00035">
    <property type="reaction ID" value="UER00044"/>
</dbReference>
<dbReference type="Proteomes" id="UP000000585">
    <property type="component" value="Chromosome"/>
</dbReference>
<dbReference type="GO" id="GO:0005829">
    <property type="term" value="C:cytosol"/>
    <property type="evidence" value="ECO:0007669"/>
    <property type="project" value="TreeGrafter"/>
</dbReference>
<dbReference type="GO" id="GO:0004834">
    <property type="term" value="F:tryptophan synthase activity"/>
    <property type="evidence" value="ECO:0007669"/>
    <property type="project" value="UniProtKB-UniRule"/>
</dbReference>
<dbReference type="CDD" id="cd04724">
    <property type="entry name" value="Tryptophan_synthase_alpha"/>
    <property type="match status" value="1"/>
</dbReference>
<dbReference type="Gene3D" id="3.20.20.70">
    <property type="entry name" value="Aldolase class I"/>
    <property type="match status" value="1"/>
</dbReference>
<dbReference type="HAMAP" id="MF_00131">
    <property type="entry name" value="Trp_synth_alpha"/>
    <property type="match status" value="1"/>
</dbReference>
<dbReference type="InterPro" id="IPR013785">
    <property type="entry name" value="Aldolase_TIM"/>
</dbReference>
<dbReference type="InterPro" id="IPR011060">
    <property type="entry name" value="RibuloseP-bd_barrel"/>
</dbReference>
<dbReference type="InterPro" id="IPR018204">
    <property type="entry name" value="Trp_synthase_alpha_AS"/>
</dbReference>
<dbReference type="InterPro" id="IPR002028">
    <property type="entry name" value="Trp_synthase_suA"/>
</dbReference>
<dbReference type="NCBIfam" id="TIGR00262">
    <property type="entry name" value="trpA"/>
    <property type="match status" value="1"/>
</dbReference>
<dbReference type="PANTHER" id="PTHR43406:SF1">
    <property type="entry name" value="TRYPTOPHAN SYNTHASE ALPHA CHAIN, CHLOROPLASTIC"/>
    <property type="match status" value="1"/>
</dbReference>
<dbReference type="PANTHER" id="PTHR43406">
    <property type="entry name" value="TRYPTOPHAN SYNTHASE, ALPHA CHAIN"/>
    <property type="match status" value="1"/>
</dbReference>
<dbReference type="Pfam" id="PF00290">
    <property type="entry name" value="Trp_syntA"/>
    <property type="match status" value="1"/>
</dbReference>
<dbReference type="SUPFAM" id="SSF51366">
    <property type="entry name" value="Ribulose-phoshate binding barrel"/>
    <property type="match status" value="1"/>
</dbReference>
<dbReference type="PROSITE" id="PS00167">
    <property type="entry name" value="TRP_SYNTHASE_ALPHA"/>
    <property type="match status" value="1"/>
</dbReference>
<proteinExistence type="evidence at protein level"/>
<sequence length="258" mass="27739">MPKTLTEKLNAIKAAGKGIFVPYIMAGDHEKGLDGLAETIHFLEDLGVSAIEVGIPFSDPVADGPVIEEAGLRSLAHGTSTQALVETLKTIETEIPLVIMTYFNPLFQYGVENFVKDLADTAVKGLIIPDLPHEHANFVEPFLANTDIALIPLVSLTTGIERQKELIEGAEGFIYAVAINGVTGKSGNYRADLDKHLAQLHQVADIPVLTGFGVSSQADLERFNAVSDGVIVGSKIVKALHQGEPIQDFIRQAVAYQK</sequence>
<keyword id="KW-0002">3D-structure</keyword>
<keyword id="KW-0028">Amino-acid biosynthesis</keyword>
<keyword id="KW-0057">Aromatic amino acid biosynthesis</keyword>
<keyword id="KW-0456">Lyase</keyword>
<keyword id="KW-1185">Reference proteome</keyword>
<keyword id="KW-0822">Tryptophan biosynthesis</keyword>
<protein>
    <recommendedName>
        <fullName evidence="1">Tryptophan synthase alpha chain</fullName>
        <ecNumber evidence="1">4.2.1.20</ecNumber>
    </recommendedName>
</protein>
<evidence type="ECO:0000255" key="1">
    <source>
        <dbReference type="HAMAP-Rule" id="MF_00131"/>
    </source>
</evidence>
<evidence type="ECO:0007829" key="2">
    <source>
        <dbReference type="PDB" id="5KIN"/>
    </source>
</evidence>
<evidence type="ECO:0007829" key="3">
    <source>
        <dbReference type="PDB" id="6QKY"/>
    </source>
</evidence>
<reference key="1">
    <citation type="journal article" date="2001" name="Science">
        <title>Complete genome sequence of a virulent isolate of Streptococcus pneumoniae.</title>
        <authorList>
            <person name="Tettelin H."/>
            <person name="Nelson K.E."/>
            <person name="Paulsen I.T."/>
            <person name="Eisen J.A."/>
            <person name="Read T.D."/>
            <person name="Peterson S.N."/>
            <person name="Heidelberg J.F."/>
            <person name="DeBoy R.T."/>
            <person name="Haft D.H."/>
            <person name="Dodson R.J."/>
            <person name="Durkin A.S."/>
            <person name="Gwinn M.L."/>
            <person name="Kolonay J.F."/>
            <person name="Nelson W.C."/>
            <person name="Peterson J.D."/>
            <person name="Umayam L.A."/>
            <person name="White O."/>
            <person name="Salzberg S.L."/>
            <person name="Lewis M.R."/>
            <person name="Radune D."/>
            <person name="Holtzapple E.K."/>
            <person name="Khouri H.M."/>
            <person name="Wolf A.M."/>
            <person name="Utterback T.R."/>
            <person name="Hansen C.L."/>
            <person name="McDonald L.A."/>
            <person name="Feldblyum T.V."/>
            <person name="Angiuoli S.V."/>
            <person name="Dickinson T."/>
            <person name="Hickey E.K."/>
            <person name="Holt I.E."/>
            <person name="Loftus B.J."/>
            <person name="Yang F."/>
            <person name="Smith H.O."/>
            <person name="Venter J.C."/>
            <person name="Dougherty B.A."/>
            <person name="Morrison D.A."/>
            <person name="Hollingshead S.K."/>
            <person name="Fraser C.M."/>
        </authorList>
    </citation>
    <scope>NUCLEOTIDE SEQUENCE [LARGE SCALE GENOMIC DNA]</scope>
    <source>
        <strain>ATCC BAA-334 / TIGR4</strain>
    </source>
</reference>
<feature type="chain" id="PRO_0000098854" description="Tryptophan synthase alpha chain">
    <location>
        <begin position="1"/>
        <end position="258"/>
    </location>
</feature>
<feature type="active site" description="Proton acceptor" evidence="1">
    <location>
        <position position="52"/>
    </location>
</feature>
<feature type="active site" description="Proton acceptor" evidence="1">
    <location>
        <position position="63"/>
    </location>
</feature>
<feature type="helix" evidence="2">
    <location>
        <begin position="4"/>
        <end position="14"/>
    </location>
</feature>
<feature type="strand" evidence="2">
    <location>
        <begin position="19"/>
        <end position="25"/>
    </location>
</feature>
<feature type="strand" evidence="2">
    <location>
        <begin position="29"/>
        <end position="31"/>
    </location>
</feature>
<feature type="helix" evidence="2">
    <location>
        <begin position="32"/>
        <end position="35"/>
    </location>
</feature>
<feature type="helix" evidence="2">
    <location>
        <begin position="36"/>
        <end position="44"/>
    </location>
</feature>
<feature type="turn" evidence="2">
    <location>
        <begin position="45"/>
        <end position="47"/>
    </location>
</feature>
<feature type="strand" evidence="2">
    <location>
        <begin position="51"/>
        <end position="54"/>
    </location>
</feature>
<feature type="helix" evidence="2">
    <location>
        <begin position="65"/>
        <end position="76"/>
    </location>
</feature>
<feature type="helix" evidence="2">
    <location>
        <begin position="81"/>
        <end position="88"/>
    </location>
</feature>
<feature type="strand" evidence="2">
    <location>
        <begin position="97"/>
        <end position="100"/>
    </location>
</feature>
<feature type="helix" evidence="2">
    <location>
        <begin position="103"/>
        <end position="109"/>
    </location>
</feature>
<feature type="helix" evidence="2">
    <location>
        <begin position="111"/>
        <end position="116"/>
    </location>
</feature>
<feature type="turn" evidence="2">
    <location>
        <begin position="117"/>
        <end position="120"/>
    </location>
</feature>
<feature type="strand" evidence="2">
    <location>
        <begin position="121"/>
        <end position="127"/>
    </location>
</feature>
<feature type="helix" evidence="2">
    <location>
        <begin position="133"/>
        <end position="138"/>
    </location>
</feature>
<feature type="helix" evidence="2">
    <location>
        <begin position="140"/>
        <end position="143"/>
    </location>
</feature>
<feature type="strand" evidence="2">
    <location>
        <begin position="153"/>
        <end position="155"/>
    </location>
</feature>
<feature type="helix" evidence="2">
    <location>
        <begin position="160"/>
        <end position="167"/>
    </location>
</feature>
<feature type="strand" evidence="2">
    <location>
        <begin position="174"/>
        <end position="177"/>
    </location>
</feature>
<feature type="strand" evidence="3">
    <location>
        <begin position="183"/>
        <end position="185"/>
    </location>
</feature>
<feature type="helix" evidence="2">
    <location>
        <begin position="191"/>
        <end position="202"/>
    </location>
</feature>
<feature type="strand" evidence="2">
    <location>
        <begin position="208"/>
        <end position="210"/>
    </location>
</feature>
<feature type="helix" evidence="2">
    <location>
        <begin position="217"/>
        <end position="224"/>
    </location>
</feature>
<feature type="strand" evidence="2">
    <location>
        <begin position="227"/>
        <end position="232"/>
    </location>
</feature>
<feature type="helix" evidence="2">
    <location>
        <begin position="234"/>
        <end position="242"/>
    </location>
</feature>
<feature type="helix" evidence="2">
    <location>
        <begin position="247"/>
        <end position="254"/>
    </location>
</feature>
<accession>Q97P33</accession>